<dbReference type="EMBL" id="AY653733">
    <property type="protein sequence ID" value="AAV50737.1"/>
    <property type="molecule type" value="Genomic_DNA"/>
</dbReference>
<dbReference type="KEGG" id="vg:9925096"/>
<dbReference type="OrthoDB" id="30894at10239"/>
<dbReference type="Proteomes" id="UP000001134">
    <property type="component" value="Genome"/>
</dbReference>
<keyword id="KW-1185">Reference proteome</keyword>
<organism>
    <name type="scientific">Acanthamoeba polyphaga mimivirus</name>
    <name type="common">APMV</name>
    <dbReference type="NCBI Taxonomy" id="212035"/>
    <lineage>
        <taxon>Viruses</taxon>
        <taxon>Varidnaviria</taxon>
        <taxon>Bamfordvirae</taxon>
        <taxon>Nucleocytoviricota</taxon>
        <taxon>Megaviricetes</taxon>
        <taxon>Imitervirales</taxon>
        <taxon>Mimiviridae</taxon>
        <taxon>Megamimivirinae</taxon>
        <taxon>Mimivirus</taxon>
        <taxon>Mimivirus bradfordmassiliense</taxon>
    </lineage>
</organism>
<accession>Q5UQE5</accession>
<organismHost>
    <name type="scientific">Acanthamoeba polyphaga</name>
    <name type="common">Amoeba</name>
    <dbReference type="NCBI Taxonomy" id="5757"/>
</organismHost>
<sequence length="401" mass="47411">MVSIEFDSSHIDRFIKIVYGTRNELIDSDSYLRKFIEFSGTDGCINIIKNKYELIYFRFVNEKWTFYGDKKFLPKKWQLKLFQPIFVNLDKNLAYLGAYFNGNLRIIYTEDIDGRISTMYPCDYCVVNFKNNTQTNIINGYYYQKPLEYKDILMITNKGIVYFNSSSCIDMIISLLKLNLVGIETSNVISVLPKNIMDIVIKDFDSCKSSLLLNKPNNLYSNIFNQIKSNDSDFYCKKITIFNNKIIEILALNCASNYQSVINFVDNLKNDFITELQQLYRWFRKHPVEKKLVFSTYDDHGYTVLLNKIHEKILSIEDKKIPNKFWIPQKKIIDMFNENIDVYSNIGFTMDLVSAIKYRSQFANIVYHIFTLSNKKTEKNNFYPFKIFSPYLFILEHILNQ</sequence>
<gene>
    <name type="ordered locus">MIMI_L471</name>
</gene>
<protein>
    <recommendedName>
        <fullName>Uncharacterized protein L471</fullName>
    </recommendedName>
</protein>
<reference key="1">
    <citation type="journal article" date="2004" name="Science">
        <title>The 1.2-megabase genome sequence of Mimivirus.</title>
        <authorList>
            <person name="Raoult D."/>
            <person name="Audic S."/>
            <person name="Robert C."/>
            <person name="Abergel C."/>
            <person name="Renesto P."/>
            <person name="Ogata H."/>
            <person name="La Scola B."/>
            <person name="Susan M."/>
            <person name="Claverie J.-M."/>
        </authorList>
    </citation>
    <scope>NUCLEOTIDE SEQUENCE [LARGE SCALE GENOMIC DNA]</scope>
    <source>
        <strain>Rowbotham-Bradford</strain>
    </source>
</reference>
<name>YL471_MIMIV</name>
<feature type="chain" id="PRO_0000244778" description="Uncharacterized protein L471">
    <location>
        <begin position="1"/>
        <end position="401"/>
    </location>
</feature>
<proteinExistence type="predicted"/>